<accession>B8E666</accession>
<sequence>MPLTVNCPICKAPVEWVPQSAFKPFCSERCKLIDLGDWASEKHVIPVKAEFDPEAFDEFDLDKGDFFKE</sequence>
<protein>
    <recommendedName>
        <fullName evidence="1">DNA gyrase inhibitor YacG</fullName>
    </recommendedName>
</protein>
<organism>
    <name type="scientific">Shewanella baltica (strain OS223)</name>
    <dbReference type="NCBI Taxonomy" id="407976"/>
    <lineage>
        <taxon>Bacteria</taxon>
        <taxon>Pseudomonadati</taxon>
        <taxon>Pseudomonadota</taxon>
        <taxon>Gammaproteobacteria</taxon>
        <taxon>Alteromonadales</taxon>
        <taxon>Shewanellaceae</taxon>
        <taxon>Shewanella</taxon>
    </lineage>
</organism>
<comment type="function">
    <text evidence="1">Inhibits all the catalytic activities of DNA gyrase by preventing its interaction with DNA. Acts by binding directly to the C-terminal domain of GyrB, which probably disrupts DNA binding by the gyrase.</text>
</comment>
<comment type="cofactor">
    <cofactor evidence="1">
        <name>Zn(2+)</name>
        <dbReference type="ChEBI" id="CHEBI:29105"/>
    </cofactor>
    <text evidence="1">Binds 1 zinc ion.</text>
</comment>
<comment type="subunit">
    <text evidence="1">Interacts with GyrB.</text>
</comment>
<comment type="similarity">
    <text evidence="1">Belongs to the DNA gyrase inhibitor YacG family.</text>
</comment>
<reference key="1">
    <citation type="submission" date="2008-12" db="EMBL/GenBank/DDBJ databases">
        <title>Complete sequence of chromosome of Shewanella baltica OS223.</title>
        <authorList>
            <consortium name="US DOE Joint Genome Institute"/>
            <person name="Lucas S."/>
            <person name="Copeland A."/>
            <person name="Lapidus A."/>
            <person name="Glavina del Rio T."/>
            <person name="Dalin E."/>
            <person name="Tice H."/>
            <person name="Bruce D."/>
            <person name="Goodwin L."/>
            <person name="Pitluck S."/>
            <person name="Chertkov O."/>
            <person name="Meincke L."/>
            <person name="Brettin T."/>
            <person name="Detter J.C."/>
            <person name="Han C."/>
            <person name="Kuske C.R."/>
            <person name="Larimer F."/>
            <person name="Land M."/>
            <person name="Hauser L."/>
            <person name="Kyrpides N."/>
            <person name="Ovchinnikova G."/>
            <person name="Brettar I."/>
            <person name="Rodrigues J."/>
            <person name="Konstantinidis K."/>
            <person name="Tiedje J."/>
        </authorList>
    </citation>
    <scope>NUCLEOTIDE SEQUENCE [LARGE SCALE GENOMIC DNA]</scope>
    <source>
        <strain>OS223</strain>
    </source>
</reference>
<dbReference type="EMBL" id="CP001252">
    <property type="protein sequence ID" value="ACK48347.1"/>
    <property type="molecule type" value="Genomic_DNA"/>
</dbReference>
<dbReference type="RefSeq" id="WP_012588717.1">
    <property type="nucleotide sequence ID" value="NC_011663.1"/>
</dbReference>
<dbReference type="SMR" id="B8E666"/>
<dbReference type="KEGG" id="sbp:Sbal223_3872"/>
<dbReference type="HOGENOM" id="CLU_178280_3_2_6"/>
<dbReference type="Proteomes" id="UP000002507">
    <property type="component" value="Chromosome"/>
</dbReference>
<dbReference type="GO" id="GO:0008657">
    <property type="term" value="F:DNA topoisomerase type II (double strand cut, ATP-hydrolyzing) inhibitor activity"/>
    <property type="evidence" value="ECO:0007669"/>
    <property type="project" value="UniProtKB-UniRule"/>
</dbReference>
<dbReference type="GO" id="GO:0008270">
    <property type="term" value="F:zinc ion binding"/>
    <property type="evidence" value="ECO:0007669"/>
    <property type="project" value="UniProtKB-UniRule"/>
</dbReference>
<dbReference type="GO" id="GO:0006355">
    <property type="term" value="P:regulation of DNA-templated transcription"/>
    <property type="evidence" value="ECO:0007669"/>
    <property type="project" value="InterPro"/>
</dbReference>
<dbReference type="Gene3D" id="3.30.50.10">
    <property type="entry name" value="Erythroid Transcription Factor GATA-1, subunit A"/>
    <property type="match status" value="1"/>
</dbReference>
<dbReference type="HAMAP" id="MF_00649">
    <property type="entry name" value="DNA_gyrase_inhibitor_YacG"/>
    <property type="match status" value="1"/>
</dbReference>
<dbReference type="InterPro" id="IPR005584">
    <property type="entry name" value="DNA_gyrase_inhibitor_YacG"/>
</dbReference>
<dbReference type="InterPro" id="IPR013088">
    <property type="entry name" value="Znf_NHR/GATA"/>
</dbReference>
<dbReference type="NCBIfam" id="NF001638">
    <property type="entry name" value="PRK00418.1"/>
    <property type="match status" value="1"/>
</dbReference>
<dbReference type="PANTHER" id="PTHR36150">
    <property type="entry name" value="DNA GYRASE INHIBITOR YACG"/>
    <property type="match status" value="1"/>
</dbReference>
<dbReference type="PANTHER" id="PTHR36150:SF1">
    <property type="entry name" value="DNA GYRASE INHIBITOR YACG"/>
    <property type="match status" value="1"/>
</dbReference>
<dbReference type="Pfam" id="PF03884">
    <property type="entry name" value="YacG"/>
    <property type="match status" value="1"/>
</dbReference>
<dbReference type="SUPFAM" id="SSF57716">
    <property type="entry name" value="Glucocorticoid receptor-like (DNA-binding domain)"/>
    <property type="match status" value="1"/>
</dbReference>
<feature type="chain" id="PRO_1000200415" description="DNA gyrase inhibitor YacG">
    <location>
        <begin position="1"/>
        <end position="69"/>
    </location>
</feature>
<feature type="binding site" evidence="1">
    <location>
        <position position="7"/>
    </location>
    <ligand>
        <name>Zn(2+)</name>
        <dbReference type="ChEBI" id="CHEBI:29105"/>
    </ligand>
</feature>
<feature type="binding site" evidence="1">
    <location>
        <position position="10"/>
    </location>
    <ligand>
        <name>Zn(2+)</name>
        <dbReference type="ChEBI" id="CHEBI:29105"/>
    </ligand>
</feature>
<feature type="binding site" evidence="1">
    <location>
        <position position="26"/>
    </location>
    <ligand>
        <name>Zn(2+)</name>
        <dbReference type="ChEBI" id="CHEBI:29105"/>
    </ligand>
</feature>
<feature type="binding site" evidence="1">
    <location>
        <position position="30"/>
    </location>
    <ligand>
        <name>Zn(2+)</name>
        <dbReference type="ChEBI" id="CHEBI:29105"/>
    </ligand>
</feature>
<name>YACG_SHEB2</name>
<evidence type="ECO:0000255" key="1">
    <source>
        <dbReference type="HAMAP-Rule" id="MF_00649"/>
    </source>
</evidence>
<proteinExistence type="inferred from homology"/>
<gene>
    <name evidence="1" type="primary">yacG</name>
    <name type="ordered locus">Sbal223_3872</name>
</gene>
<keyword id="KW-0479">Metal-binding</keyword>
<keyword id="KW-0862">Zinc</keyword>